<organism>
    <name type="scientific">Homo sapiens</name>
    <name type="common">Human</name>
    <dbReference type="NCBI Taxonomy" id="9606"/>
    <lineage>
        <taxon>Eukaryota</taxon>
        <taxon>Metazoa</taxon>
        <taxon>Chordata</taxon>
        <taxon>Craniata</taxon>
        <taxon>Vertebrata</taxon>
        <taxon>Euteleostomi</taxon>
        <taxon>Mammalia</taxon>
        <taxon>Eutheria</taxon>
        <taxon>Euarchontoglires</taxon>
        <taxon>Primates</taxon>
        <taxon>Haplorrhini</taxon>
        <taxon>Catarrhini</taxon>
        <taxon>Hominidae</taxon>
        <taxon>Homo</taxon>
    </lineage>
</organism>
<keyword id="KW-0002">3D-structure</keyword>
<keyword id="KW-0025">Alternative splicing</keyword>
<keyword id="KW-0963">Cytoplasm</keyword>
<keyword id="KW-0343">GTPase activation</keyword>
<keyword id="KW-0449">Lipoprotein</keyword>
<keyword id="KW-0539">Nucleus</keyword>
<keyword id="KW-0564">Palmitate</keyword>
<keyword id="KW-0597">Phosphoprotein</keyword>
<keyword id="KW-1267">Proteomics identification</keyword>
<keyword id="KW-1185">Reference proteome</keyword>
<keyword id="KW-0734">Signal transduction inhibitor</keyword>
<dbReference type="EMBL" id="AF368902">
    <property type="protein sequence ID" value="AAK52979.1"/>
    <property type="molecule type" value="mRNA"/>
</dbReference>
<dbReference type="EMBL" id="AF045229">
    <property type="protein sequence ID" value="AAC03783.1"/>
    <property type="molecule type" value="mRNA"/>
</dbReference>
<dbReference type="EMBL" id="AF493934">
    <property type="protein sequence ID" value="AAM12648.1"/>
    <property type="molecule type" value="mRNA"/>
</dbReference>
<dbReference type="EMBL" id="AK290773">
    <property type="protein sequence ID" value="BAF83462.1"/>
    <property type="molecule type" value="mRNA"/>
</dbReference>
<dbReference type="EMBL" id="CR457008">
    <property type="protein sequence ID" value="CAG33289.1"/>
    <property type="molecule type" value="mRNA"/>
</dbReference>
<dbReference type="EMBL" id="AC012468">
    <property type="status" value="NOT_ANNOTATED_CDS"/>
    <property type="molecule type" value="Genomic_DNA"/>
</dbReference>
<dbReference type="EMBL" id="AL355273">
    <property type="status" value="NOT_ANNOTATED_CDS"/>
    <property type="molecule type" value="Genomic_DNA"/>
</dbReference>
<dbReference type="EMBL" id="CH471066">
    <property type="protein sequence ID" value="EAW49389.1"/>
    <property type="molecule type" value="Genomic_DNA"/>
</dbReference>
<dbReference type="EMBL" id="CH471066">
    <property type="protein sequence ID" value="EAW49390.1"/>
    <property type="molecule type" value="Genomic_DNA"/>
</dbReference>
<dbReference type="EMBL" id="BC009361">
    <property type="protein sequence ID" value="AAH09361.1"/>
    <property type="molecule type" value="mRNA"/>
</dbReference>
<dbReference type="CCDS" id="CCDS31294.1">
    <molecule id="O43665-3"/>
</dbReference>
<dbReference type="CCDS" id="CCDS41572.1">
    <molecule id="O43665-2"/>
</dbReference>
<dbReference type="PIR" id="S71812">
    <property type="entry name" value="S71812"/>
</dbReference>
<dbReference type="RefSeq" id="NP_001005339.1">
    <molecule id="O43665-3"/>
    <property type="nucleotide sequence ID" value="NM_001005339.2"/>
</dbReference>
<dbReference type="RefSeq" id="NP_002916.1">
    <molecule id="O43665-2"/>
    <property type="nucleotide sequence ID" value="NM_002925.4"/>
</dbReference>
<dbReference type="PDB" id="2DLR">
    <property type="method" value="NMR"/>
    <property type="chains" value="A=31-166"/>
</dbReference>
<dbReference type="PDB" id="2I59">
    <property type="method" value="NMR"/>
    <property type="chains" value="A=30-165"/>
</dbReference>
<dbReference type="PDB" id="2IHB">
    <property type="method" value="X-ray"/>
    <property type="resolution" value="2.71 A"/>
    <property type="chains" value="B=10-160"/>
</dbReference>
<dbReference type="PDBsum" id="2DLR"/>
<dbReference type="PDBsum" id="2I59"/>
<dbReference type="PDBsum" id="2IHB"/>
<dbReference type="BMRB" id="O43665"/>
<dbReference type="SMR" id="O43665"/>
<dbReference type="BioGRID" id="111933">
    <property type="interactions" value="14"/>
</dbReference>
<dbReference type="DIP" id="DIP-50368N"/>
<dbReference type="FunCoup" id="O43665">
    <property type="interactions" value="1094"/>
</dbReference>
<dbReference type="IntAct" id="O43665">
    <property type="interactions" value="5"/>
</dbReference>
<dbReference type="STRING" id="9606.ENSP00000358099"/>
<dbReference type="GlyGen" id="O43665">
    <property type="glycosylation" value="1 site, 1 O-linked glycan (1 site)"/>
</dbReference>
<dbReference type="iPTMnet" id="O43665"/>
<dbReference type="PhosphoSitePlus" id="O43665"/>
<dbReference type="SwissPalm" id="O43665"/>
<dbReference type="BioMuta" id="RGS10"/>
<dbReference type="OGP" id="O43665"/>
<dbReference type="jPOST" id="O43665"/>
<dbReference type="MassIVE" id="O43665"/>
<dbReference type="PaxDb" id="9606-ENSP00000358099"/>
<dbReference type="PeptideAtlas" id="O43665"/>
<dbReference type="ProteomicsDB" id="49096">
    <molecule id="O43665-1"/>
</dbReference>
<dbReference type="ProteomicsDB" id="49097">
    <molecule id="O43665-2"/>
</dbReference>
<dbReference type="ProteomicsDB" id="49098">
    <molecule id="O43665-3"/>
</dbReference>
<dbReference type="Pumba" id="O43665"/>
<dbReference type="TopDownProteomics" id="O43665-3">
    <molecule id="O43665-3"/>
</dbReference>
<dbReference type="Antibodypedia" id="3878">
    <property type="antibodies" value="223 antibodies from 31 providers"/>
</dbReference>
<dbReference type="DNASU" id="6001"/>
<dbReference type="Ensembl" id="ENST00000369101.7">
    <molecule id="O43665-1"/>
    <property type="protein sequence ID" value="ENSP00000358097.3"/>
    <property type="gene ID" value="ENSG00000148908.15"/>
</dbReference>
<dbReference type="Ensembl" id="ENST00000369103.3">
    <molecule id="O43665-3"/>
    <property type="protein sequence ID" value="ENSP00000358099.2"/>
    <property type="gene ID" value="ENSG00000148908.15"/>
</dbReference>
<dbReference type="Ensembl" id="ENST00000392865.5">
    <molecule id="O43665-2"/>
    <property type="protein sequence ID" value="ENSP00000376605.1"/>
    <property type="gene ID" value="ENSG00000148908.15"/>
</dbReference>
<dbReference type="GeneID" id="6001"/>
<dbReference type="KEGG" id="hsa:6001"/>
<dbReference type="MANE-Select" id="ENST00000369103.3">
    <property type="protein sequence ID" value="ENSP00000358099.2"/>
    <property type="RefSeq nucleotide sequence ID" value="NM_001005339.2"/>
    <property type="RefSeq protein sequence ID" value="NP_001005339.1"/>
</dbReference>
<dbReference type="UCSC" id="uc001lee.4">
    <molecule id="O43665-3"/>
    <property type="organism name" value="human"/>
</dbReference>
<dbReference type="AGR" id="HGNC:9992"/>
<dbReference type="CTD" id="6001"/>
<dbReference type="DisGeNET" id="6001"/>
<dbReference type="GeneCards" id="RGS10"/>
<dbReference type="HGNC" id="HGNC:9992">
    <property type="gene designation" value="RGS10"/>
</dbReference>
<dbReference type="HPA" id="ENSG00000148908">
    <property type="expression patterns" value="Tissue enhanced (lymphoid)"/>
</dbReference>
<dbReference type="MIM" id="602856">
    <property type="type" value="gene"/>
</dbReference>
<dbReference type="neXtProt" id="NX_O43665"/>
<dbReference type="OpenTargets" id="ENSG00000148908"/>
<dbReference type="PharmGKB" id="PA34362"/>
<dbReference type="VEuPathDB" id="HostDB:ENSG00000148908"/>
<dbReference type="eggNOG" id="KOG3589">
    <property type="taxonomic scope" value="Eukaryota"/>
</dbReference>
<dbReference type="GeneTree" id="ENSGT00940000161426"/>
<dbReference type="HOGENOM" id="CLU_059863_1_4_1"/>
<dbReference type="InParanoid" id="O43665"/>
<dbReference type="OMA" id="SNKASYQ"/>
<dbReference type="OrthoDB" id="196547at2759"/>
<dbReference type="PAN-GO" id="O43665">
    <property type="GO annotations" value="5 GO annotations based on evolutionary models"/>
</dbReference>
<dbReference type="PhylomeDB" id="O43665"/>
<dbReference type="TreeFam" id="TF315837"/>
<dbReference type="PathwayCommons" id="O43665"/>
<dbReference type="Reactome" id="R-HSA-418594">
    <property type="pathway name" value="G alpha (i) signalling events"/>
</dbReference>
<dbReference type="SignaLink" id="O43665"/>
<dbReference type="SIGNOR" id="O43665"/>
<dbReference type="BioGRID-ORCS" id="6001">
    <property type="hits" value="17 hits in 1161 CRISPR screens"/>
</dbReference>
<dbReference type="ChiTaRS" id="RGS10">
    <property type="organism name" value="human"/>
</dbReference>
<dbReference type="EvolutionaryTrace" id="O43665"/>
<dbReference type="GeneWiki" id="RGS10"/>
<dbReference type="GenomeRNAi" id="6001"/>
<dbReference type="Pharos" id="O43665">
    <property type="development level" value="Tbio"/>
</dbReference>
<dbReference type="PRO" id="PR:O43665"/>
<dbReference type="Proteomes" id="UP000005640">
    <property type="component" value="Chromosome 10"/>
</dbReference>
<dbReference type="RNAct" id="O43665">
    <property type="molecule type" value="protein"/>
</dbReference>
<dbReference type="Bgee" id="ENSG00000148908">
    <property type="expression patterns" value="Expressed in monocyte and 194 other cell types or tissues"/>
</dbReference>
<dbReference type="GO" id="GO:0005829">
    <property type="term" value="C:cytosol"/>
    <property type="evidence" value="ECO:0000314"/>
    <property type="project" value="UniProtKB"/>
</dbReference>
<dbReference type="GO" id="GO:0016604">
    <property type="term" value="C:nuclear body"/>
    <property type="evidence" value="ECO:0000314"/>
    <property type="project" value="HPA"/>
</dbReference>
<dbReference type="GO" id="GO:0005654">
    <property type="term" value="C:nucleoplasm"/>
    <property type="evidence" value="ECO:0000314"/>
    <property type="project" value="HPA"/>
</dbReference>
<dbReference type="GO" id="GO:0005634">
    <property type="term" value="C:nucleus"/>
    <property type="evidence" value="ECO:0000314"/>
    <property type="project" value="UniProtKB"/>
</dbReference>
<dbReference type="GO" id="GO:0005886">
    <property type="term" value="C:plasma membrane"/>
    <property type="evidence" value="ECO:0000304"/>
    <property type="project" value="Reactome"/>
</dbReference>
<dbReference type="GO" id="GO:0045202">
    <property type="term" value="C:synapse"/>
    <property type="evidence" value="ECO:0007669"/>
    <property type="project" value="GOC"/>
</dbReference>
<dbReference type="GO" id="GO:0001965">
    <property type="term" value="F:G-protein alpha-subunit binding"/>
    <property type="evidence" value="ECO:0000353"/>
    <property type="project" value="UniProtKB"/>
</dbReference>
<dbReference type="GO" id="GO:0005096">
    <property type="term" value="F:GTPase activator activity"/>
    <property type="evidence" value="ECO:0000314"/>
    <property type="project" value="UniProtKB"/>
</dbReference>
<dbReference type="GO" id="GO:0003924">
    <property type="term" value="F:GTPase activity"/>
    <property type="evidence" value="ECO:0000304"/>
    <property type="project" value="Reactome"/>
</dbReference>
<dbReference type="GO" id="GO:0007213">
    <property type="term" value="P:G protein-coupled acetylcholine receptor signaling pathway"/>
    <property type="evidence" value="ECO:0000314"/>
    <property type="project" value="UniProtKB"/>
</dbReference>
<dbReference type="GO" id="GO:0007186">
    <property type="term" value="P:G protein-coupled receptor signaling pathway"/>
    <property type="evidence" value="ECO:0000304"/>
    <property type="project" value="Reactome"/>
</dbReference>
<dbReference type="GO" id="GO:0009968">
    <property type="term" value="P:negative regulation of signal transduction"/>
    <property type="evidence" value="ECO:0007669"/>
    <property type="project" value="UniProtKB-KW"/>
</dbReference>
<dbReference type="GO" id="GO:0043547">
    <property type="term" value="P:positive regulation of GTPase activity"/>
    <property type="evidence" value="ECO:0000314"/>
    <property type="project" value="UniProtKB"/>
</dbReference>
<dbReference type="GO" id="GO:0008277">
    <property type="term" value="P:regulation of G protein-coupled receptor signaling pathway"/>
    <property type="evidence" value="ECO:0007669"/>
    <property type="project" value="InterPro"/>
</dbReference>
<dbReference type="CDD" id="cd08741">
    <property type="entry name" value="RGS_RGS10"/>
    <property type="match status" value="1"/>
</dbReference>
<dbReference type="FunFam" id="1.10.167.10:FF:000001">
    <property type="entry name" value="Putative regulator of g-protein signaling 12"/>
    <property type="match status" value="1"/>
</dbReference>
<dbReference type="Gene3D" id="1.10.196.10">
    <property type="match status" value="1"/>
</dbReference>
<dbReference type="Gene3D" id="1.10.167.10">
    <property type="entry name" value="Regulator of G-protein Signalling 4, domain 2"/>
    <property type="match status" value="1"/>
</dbReference>
<dbReference type="IDEAL" id="IID00693"/>
<dbReference type="InterPro" id="IPR016137">
    <property type="entry name" value="RGS"/>
</dbReference>
<dbReference type="InterPro" id="IPR046995">
    <property type="entry name" value="RGS10/12/14-like"/>
</dbReference>
<dbReference type="InterPro" id="IPR037879">
    <property type="entry name" value="RGS10_RGS"/>
</dbReference>
<dbReference type="InterPro" id="IPR036305">
    <property type="entry name" value="RGS_sf"/>
</dbReference>
<dbReference type="InterPro" id="IPR024066">
    <property type="entry name" value="RGS_subdom1/3"/>
</dbReference>
<dbReference type="InterPro" id="IPR044926">
    <property type="entry name" value="RGS_subdomain_2"/>
</dbReference>
<dbReference type="PANTHER" id="PTHR45945">
    <property type="entry name" value="REGULATOR OF G-PROTEIN SIGNALING LOCO"/>
    <property type="match status" value="1"/>
</dbReference>
<dbReference type="PANTHER" id="PTHR45945:SF3">
    <property type="entry name" value="REGULATOR OF G-PROTEIN SIGNALING LOCO"/>
    <property type="match status" value="1"/>
</dbReference>
<dbReference type="Pfam" id="PF00615">
    <property type="entry name" value="RGS"/>
    <property type="match status" value="1"/>
</dbReference>
<dbReference type="PRINTS" id="PR01301">
    <property type="entry name" value="RGSPROTEIN"/>
</dbReference>
<dbReference type="SMART" id="SM00315">
    <property type="entry name" value="RGS"/>
    <property type="match status" value="1"/>
</dbReference>
<dbReference type="SUPFAM" id="SSF48097">
    <property type="entry name" value="Regulator of G-protein signaling, RGS"/>
    <property type="match status" value="1"/>
</dbReference>
<dbReference type="PROSITE" id="PS50132">
    <property type="entry name" value="RGS"/>
    <property type="match status" value="1"/>
</dbReference>
<accession>O43665</accession>
<accession>A8K408</accession>
<accession>B1AMR8</accession>
<accession>Q6IAZ6</accession>
<accession>Q96GN0</accession>
<protein>
    <recommendedName>
        <fullName>Regulator of G-protein signaling 10</fullName>
        <shortName>RGS10</shortName>
    </recommendedName>
</protein>
<comment type="function">
    <text evidence="4 6 7 8 9">Regulates G protein-coupled receptor signaling cascades, including signaling downstream of the muscarinic acetylcholine receptor CHRM2. Inhibits signal transduction by increasing the GTPase activity of G protein alpha subunits, thereby driving them into their inactive GDP-bound form (PubMed:10608901, PubMed:11443111, PubMed:18434541, PubMed:8774883, PubMed:9353196). Modulates the activity of potassium channels that are activated in response to CHRM2 signaling (PubMed:11443111). Activity on GNAZ is inhibited by palmitoylation of the G-protein (PubMed:9353196).</text>
</comment>
<comment type="subunit">
    <text evidence="6 7 8">Interacts with GNAZ, GNAI1 and GNAI3 (PubMed:11443111, PubMed:18434541, PubMed:8774883). Associates specifically with the activated, GTP-bound forms of GNAZ and GNAI3 (PubMed:8774883).</text>
</comment>
<comment type="interaction">
    <interactant intactId="EBI-1057034">
        <id>O43665</id>
    </interactant>
    <interactant intactId="EBI-742388">
        <id>Q9H8W4</id>
        <label>PLEKHF2</label>
    </interactant>
    <organismsDiffer>false</organismsDiffer>
    <experiments>3</experiments>
</comment>
<comment type="subcellular location">
    <molecule>Isoform 1</molecule>
    <subcellularLocation>
        <location evidence="6">Cytoplasm</location>
        <location evidence="6">Cytosol</location>
    </subcellularLocation>
    <subcellularLocation>
        <location evidence="6">Nucleus</location>
    </subcellularLocation>
    <text evidence="6">Forskolin treatment promotes phosphorylation and translocation to the nucleus.</text>
</comment>
<comment type="subcellular location">
    <subcellularLocation>
        <location evidence="5">Nucleus</location>
    </subcellularLocation>
</comment>
<comment type="alternative products">
    <event type="alternative splicing"/>
    <isoform>
        <id>O43665-3</id>
        <name>3</name>
        <sequence type="displayed"/>
    </isoform>
    <isoform>
        <id>O43665-1</id>
        <name>1</name>
        <sequence type="described" ref="VSP_060088"/>
    </isoform>
    <isoform>
        <id>O43665-2</id>
        <name>2</name>
        <sequence type="described" ref="VSP_060087"/>
    </isoform>
</comment>
<gene>
    <name type="primary">RGS10</name>
</gene>
<feature type="chain" id="PRO_0000204207" description="Regulator of G-protein signaling 10">
    <location>
        <begin position="1"/>
        <end position="181"/>
    </location>
</feature>
<feature type="domain" description="RGS" evidence="2">
    <location>
        <begin position="41"/>
        <end position="156"/>
    </location>
</feature>
<feature type="region of interest" description="Disordered" evidence="3">
    <location>
        <begin position="1"/>
        <end position="32"/>
    </location>
</feature>
<feature type="region of interest" description="Disordered" evidence="3">
    <location>
        <begin position="158"/>
        <end position="181"/>
    </location>
</feature>
<feature type="compositionally biased region" description="Low complexity" evidence="3">
    <location>
        <begin position="23"/>
        <end position="32"/>
    </location>
</feature>
<feature type="modified residue" description="Phosphoserine" evidence="11">
    <location>
        <position position="24"/>
    </location>
</feature>
<feature type="modified residue" description="Phosphoserine" evidence="1">
    <location>
        <position position="41"/>
    </location>
</feature>
<feature type="modified residue" description="Phosphoserine" evidence="6">
    <location>
        <position position="176"/>
    </location>
</feature>
<feature type="lipid moiety-binding region" description="S-palmitoyl cysteine" evidence="4">
    <location>
        <position position="74"/>
    </location>
</feature>
<feature type="splice variant" id="VSP_060087" description="In isoform 2." evidence="10">
    <original>MFNRAVSRLSRKRPPSD</original>
    <variation>MEH</variation>
    <location>
        <begin position="1"/>
        <end position="17"/>
    </location>
</feature>
<feature type="splice variant" id="VSP_060088" description="In isoform 1." evidence="6 8">
    <original>MFNRAVSRLSRKRPPS</original>
    <variation>MQSELCFA</variation>
    <location>
        <begin position="1"/>
        <end position="16"/>
    </location>
</feature>
<feature type="sequence variant" id="VAR_011896" description="In dbSNP:rs1802228.">
    <original>A</original>
    <variation>V</variation>
    <location>
        <position position="102"/>
    </location>
</feature>
<feature type="mutagenesis site" description="Abolishes phosphorylation site and leads to strongly reduced overall phosphorylation." evidence="6">
    <original>S</original>
    <variation>A</variation>
    <location>
        <position position="176"/>
    </location>
</feature>
<feature type="helix" evidence="14">
    <location>
        <begin position="33"/>
        <end position="40"/>
    </location>
</feature>
<feature type="helix" evidence="14">
    <location>
        <begin position="42"/>
        <end position="47"/>
    </location>
</feature>
<feature type="helix" evidence="14">
    <location>
        <begin position="49"/>
        <end position="61"/>
    </location>
</feature>
<feature type="helix" evidence="14">
    <location>
        <begin position="66"/>
        <end position="79"/>
    </location>
</feature>
<feature type="helix" evidence="14">
    <location>
        <begin position="83"/>
        <end position="97"/>
    </location>
</feature>
<feature type="helix" evidence="13">
    <location>
        <begin position="102"/>
        <end position="104"/>
    </location>
</feature>
<feature type="helix" evidence="12">
    <location>
        <begin position="111"/>
        <end position="113"/>
    </location>
</feature>
<feature type="helix" evidence="12">
    <location>
        <begin position="116"/>
        <end position="120"/>
    </location>
</feature>
<feature type="turn" evidence="14">
    <location>
        <begin position="124"/>
        <end position="127"/>
    </location>
</feature>
<feature type="helix" evidence="14">
    <location>
        <begin position="128"/>
        <end position="140"/>
    </location>
</feature>
<feature type="helix" evidence="14">
    <location>
        <begin position="142"/>
        <end position="146"/>
    </location>
</feature>
<feature type="turn" evidence="14">
    <location>
        <begin position="150"/>
        <end position="152"/>
    </location>
</feature>
<feature type="turn" evidence="13">
    <location>
        <begin position="154"/>
        <end position="158"/>
    </location>
</feature>
<sequence>MFNRAVSRLSRKRPPSDIHDSDGSSSSSHQSLKSTAKWAASLENLLEDPEGVKRFREFLKKEFSEENVLFWLACEDFKKMQDKTQMQEKAKEIYMTFLSSKASSQVNVEGQSRLNEKILEEPHPLMFQKLQDQIFNLMKYDSYSRFLKSDLFLKHKRTEEEEEDLPDAQTAAKRASRIYNT</sequence>
<name>RGS10_HUMAN</name>
<reference key="1">
    <citation type="journal article" date="1996" name="Nature">
        <title>RGS10 is a selective activator of G alpha i GTPase activity.</title>
        <authorList>
            <person name="Hunt T.W."/>
            <person name="Fields T.A."/>
            <person name="Casey P.J."/>
            <person name="Peralta E.G."/>
        </authorList>
    </citation>
    <scope>NUCLEOTIDE SEQUENCE [MRNA] (ISOFORM 1)</scope>
    <scope>FUNCTION</scope>
    <scope>INTERACTION WITH GNAZ AND GNAI3</scope>
</reference>
<reference key="2">
    <citation type="journal article" date="2000" name="J. Biol. Chem.">
        <title>Cytoplasmic, nuclear, and Golgi localization of RGS proteins. Evidence for N-terminal and RGS domain sequences as intracellular targeting motifs.</title>
        <authorList>
            <person name="Chatterjee T.K."/>
            <person name="Fisher R.A."/>
        </authorList>
    </citation>
    <scope>NUCLEOTIDE SEQUENCE [MRNA] (ISOFORM 2)</scope>
    <scope>SUBCELLULAR LOCATION</scope>
</reference>
<reference key="3">
    <citation type="journal article" date="2001" name="J. Biol. Chem.">
        <title>Phosphorylation and nuclear translocation of a regulator of G protein signaling (RGS10).</title>
        <authorList>
            <person name="Burgon P.G."/>
            <person name="Lee W.L."/>
            <person name="Nixon A.B."/>
            <person name="Peralta E.G."/>
            <person name="Casey P.J."/>
        </authorList>
    </citation>
    <scope>NUCLEOTIDE SEQUENCE [MRNA] (ISOFORM 1)</scope>
    <scope>FUNCTION</scope>
    <scope>INTERACTION WITH GNAI3</scope>
    <scope>SUBCELLULAR LOCATION (ISOFORM 1)</scope>
    <scope>PHOSPHORYLATION AT SER-176</scope>
    <scope>MUTAGENESIS OF SER-176</scope>
</reference>
<reference key="4">
    <citation type="submission" date="2002-03" db="EMBL/GenBank/DDBJ databases">
        <title>cDNA clones of human proteins involved in signal transduction sequenced by the Guthrie cDNA resource center (www.cdna.org).</title>
        <authorList>
            <person name="Puhl H.L. III"/>
            <person name="Ikeda S.R."/>
            <person name="Aronstam R.S."/>
        </authorList>
    </citation>
    <scope>NUCLEOTIDE SEQUENCE [LARGE SCALE MRNA] (ISOFORM 1)</scope>
</reference>
<reference key="5">
    <citation type="journal article" date="2004" name="Nat. Genet.">
        <title>Complete sequencing and characterization of 21,243 full-length human cDNAs.</title>
        <authorList>
            <person name="Ota T."/>
            <person name="Suzuki Y."/>
            <person name="Nishikawa T."/>
            <person name="Otsuki T."/>
            <person name="Sugiyama T."/>
            <person name="Irie R."/>
            <person name="Wakamatsu A."/>
            <person name="Hayashi K."/>
            <person name="Sato H."/>
            <person name="Nagai K."/>
            <person name="Kimura K."/>
            <person name="Makita H."/>
            <person name="Sekine M."/>
            <person name="Obayashi M."/>
            <person name="Nishi T."/>
            <person name="Shibahara T."/>
            <person name="Tanaka T."/>
            <person name="Ishii S."/>
            <person name="Yamamoto J."/>
            <person name="Saito K."/>
            <person name="Kawai Y."/>
            <person name="Isono Y."/>
            <person name="Nakamura Y."/>
            <person name="Nagahari K."/>
            <person name="Murakami K."/>
            <person name="Yasuda T."/>
            <person name="Iwayanagi T."/>
            <person name="Wagatsuma M."/>
            <person name="Shiratori A."/>
            <person name="Sudo H."/>
            <person name="Hosoiri T."/>
            <person name="Kaku Y."/>
            <person name="Kodaira H."/>
            <person name="Kondo H."/>
            <person name="Sugawara M."/>
            <person name="Takahashi M."/>
            <person name="Kanda K."/>
            <person name="Yokoi T."/>
            <person name="Furuya T."/>
            <person name="Kikkawa E."/>
            <person name="Omura Y."/>
            <person name="Abe K."/>
            <person name="Kamihara K."/>
            <person name="Katsuta N."/>
            <person name="Sato K."/>
            <person name="Tanikawa M."/>
            <person name="Yamazaki M."/>
            <person name="Ninomiya K."/>
            <person name="Ishibashi T."/>
            <person name="Yamashita H."/>
            <person name="Murakawa K."/>
            <person name="Fujimori K."/>
            <person name="Tanai H."/>
            <person name="Kimata M."/>
            <person name="Watanabe M."/>
            <person name="Hiraoka S."/>
            <person name="Chiba Y."/>
            <person name="Ishida S."/>
            <person name="Ono Y."/>
            <person name="Takiguchi S."/>
            <person name="Watanabe S."/>
            <person name="Yosida M."/>
            <person name="Hotuta T."/>
            <person name="Kusano J."/>
            <person name="Kanehori K."/>
            <person name="Takahashi-Fujii A."/>
            <person name="Hara H."/>
            <person name="Tanase T.-O."/>
            <person name="Nomura Y."/>
            <person name="Togiya S."/>
            <person name="Komai F."/>
            <person name="Hara R."/>
            <person name="Takeuchi K."/>
            <person name="Arita M."/>
            <person name="Imose N."/>
            <person name="Musashino K."/>
            <person name="Yuuki H."/>
            <person name="Oshima A."/>
            <person name="Sasaki N."/>
            <person name="Aotsuka S."/>
            <person name="Yoshikawa Y."/>
            <person name="Matsunawa H."/>
            <person name="Ichihara T."/>
            <person name="Shiohata N."/>
            <person name="Sano S."/>
            <person name="Moriya S."/>
            <person name="Momiyama H."/>
            <person name="Satoh N."/>
            <person name="Takami S."/>
            <person name="Terashima Y."/>
            <person name="Suzuki O."/>
            <person name="Nakagawa S."/>
            <person name="Senoh A."/>
            <person name="Mizoguchi H."/>
            <person name="Goto Y."/>
            <person name="Shimizu F."/>
            <person name="Wakebe H."/>
            <person name="Hishigaki H."/>
            <person name="Watanabe T."/>
            <person name="Sugiyama A."/>
            <person name="Takemoto M."/>
            <person name="Kawakami B."/>
            <person name="Yamazaki M."/>
            <person name="Watanabe K."/>
            <person name="Kumagai A."/>
            <person name="Itakura S."/>
            <person name="Fukuzumi Y."/>
            <person name="Fujimori Y."/>
            <person name="Komiyama M."/>
            <person name="Tashiro H."/>
            <person name="Tanigami A."/>
            <person name="Fujiwara T."/>
            <person name="Ono T."/>
            <person name="Yamada K."/>
            <person name="Fujii Y."/>
            <person name="Ozaki K."/>
            <person name="Hirao M."/>
            <person name="Ohmori Y."/>
            <person name="Kawabata A."/>
            <person name="Hikiji T."/>
            <person name="Kobatake N."/>
            <person name="Inagaki H."/>
            <person name="Ikema Y."/>
            <person name="Okamoto S."/>
            <person name="Okitani R."/>
            <person name="Kawakami T."/>
            <person name="Noguchi S."/>
            <person name="Itoh T."/>
            <person name="Shigeta K."/>
            <person name="Senba T."/>
            <person name="Matsumura K."/>
            <person name="Nakajima Y."/>
            <person name="Mizuno T."/>
            <person name="Morinaga M."/>
            <person name="Sasaki M."/>
            <person name="Togashi T."/>
            <person name="Oyama M."/>
            <person name="Hata H."/>
            <person name="Watanabe M."/>
            <person name="Komatsu T."/>
            <person name="Mizushima-Sugano J."/>
            <person name="Satoh T."/>
            <person name="Shirai Y."/>
            <person name="Takahashi Y."/>
            <person name="Nakagawa K."/>
            <person name="Okumura K."/>
            <person name="Nagase T."/>
            <person name="Nomura N."/>
            <person name="Kikuchi H."/>
            <person name="Masuho Y."/>
            <person name="Yamashita R."/>
            <person name="Nakai K."/>
            <person name="Yada T."/>
            <person name="Nakamura Y."/>
            <person name="Ohara O."/>
            <person name="Isogai T."/>
            <person name="Sugano S."/>
        </authorList>
    </citation>
    <scope>NUCLEOTIDE SEQUENCE [LARGE SCALE MRNA] (ISOFORM 3)</scope>
</reference>
<reference key="6">
    <citation type="submission" date="2004-06" db="EMBL/GenBank/DDBJ databases">
        <title>Cloning of human full open reading frames in Gateway(TM) system entry vector (pDONR201).</title>
        <authorList>
            <person name="Ebert L."/>
            <person name="Schick M."/>
            <person name="Neubert P."/>
            <person name="Schatten R."/>
            <person name="Henze S."/>
            <person name="Korn B."/>
        </authorList>
    </citation>
    <scope>NUCLEOTIDE SEQUENCE [LARGE SCALE MRNA] (ISOFORM 2)</scope>
</reference>
<reference key="7">
    <citation type="journal article" date="2004" name="Nature">
        <title>The DNA sequence and comparative analysis of human chromosome 10.</title>
        <authorList>
            <person name="Deloukas P."/>
            <person name="Earthrowl M.E."/>
            <person name="Grafham D.V."/>
            <person name="Rubenfield M."/>
            <person name="French L."/>
            <person name="Steward C.A."/>
            <person name="Sims S.K."/>
            <person name="Jones M.C."/>
            <person name="Searle S."/>
            <person name="Scott C."/>
            <person name="Howe K."/>
            <person name="Hunt S.E."/>
            <person name="Andrews T.D."/>
            <person name="Gilbert J.G.R."/>
            <person name="Swarbreck D."/>
            <person name="Ashurst J.L."/>
            <person name="Taylor A."/>
            <person name="Battles J."/>
            <person name="Bird C.P."/>
            <person name="Ainscough R."/>
            <person name="Almeida J.P."/>
            <person name="Ashwell R.I.S."/>
            <person name="Ambrose K.D."/>
            <person name="Babbage A.K."/>
            <person name="Bagguley C.L."/>
            <person name="Bailey J."/>
            <person name="Banerjee R."/>
            <person name="Bates K."/>
            <person name="Beasley H."/>
            <person name="Bray-Allen S."/>
            <person name="Brown A.J."/>
            <person name="Brown J.Y."/>
            <person name="Burford D.C."/>
            <person name="Burrill W."/>
            <person name="Burton J."/>
            <person name="Cahill P."/>
            <person name="Camire D."/>
            <person name="Carter N.P."/>
            <person name="Chapman J.C."/>
            <person name="Clark S.Y."/>
            <person name="Clarke G."/>
            <person name="Clee C.M."/>
            <person name="Clegg S."/>
            <person name="Corby N."/>
            <person name="Coulson A."/>
            <person name="Dhami P."/>
            <person name="Dutta I."/>
            <person name="Dunn M."/>
            <person name="Faulkner L."/>
            <person name="Frankish A."/>
            <person name="Frankland J.A."/>
            <person name="Garner P."/>
            <person name="Garnett J."/>
            <person name="Gribble S."/>
            <person name="Griffiths C."/>
            <person name="Grocock R."/>
            <person name="Gustafson E."/>
            <person name="Hammond S."/>
            <person name="Harley J.L."/>
            <person name="Hart E."/>
            <person name="Heath P.D."/>
            <person name="Ho T.P."/>
            <person name="Hopkins B."/>
            <person name="Horne J."/>
            <person name="Howden P.J."/>
            <person name="Huckle E."/>
            <person name="Hynds C."/>
            <person name="Johnson C."/>
            <person name="Johnson D."/>
            <person name="Kana A."/>
            <person name="Kay M."/>
            <person name="Kimberley A.M."/>
            <person name="Kershaw J.K."/>
            <person name="Kokkinaki M."/>
            <person name="Laird G.K."/>
            <person name="Lawlor S."/>
            <person name="Lee H.M."/>
            <person name="Leongamornlert D.A."/>
            <person name="Laird G."/>
            <person name="Lloyd C."/>
            <person name="Lloyd D.M."/>
            <person name="Loveland J."/>
            <person name="Lovell J."/>
            <person name="McLaren S."/>
            <person name="McLay K.E."/>
            <person name="McMurray A."/>
            <person name="Mashreghi-Mohammadi M."/>
            <person name="Matthews L."/>
            <person name="Milne S."/>
            <person name="Nickerson T."/>
            <person name="Nguyen M."/>
            <person name="Overton-Larty E."/>
            <person name="Palmer S.A."/>
            <person name="Pearce A.V."/>
            <person name="Peck A.I."/>
            <person name="Pelan S."/>
            <person name="Phillimore B."/>
            <person name="Porter K."/>
            <person name="Rice C.M."/>
            <person name="Rogosin A."/>
            <person name="Ross M.T."/>
            <person name="Sarafidou T."/>
            <person name="Sehra H.K."/>
            <person name="Shownkeen R."/>
            <person name="Skuce C.D."/>
            <person name="Smith M."/>
            <person name="Standring L."/>
            <person name="Sycamore N."/>
            <person name="Tester J."/>
            <person name="Thorpe A."/>
            <person name="Torcasso W."/>
            <person name="Tracey A."/>
            <person name="Tromans A."/>
            <person name="Tsolas J."/>
            <person name="Wall M."/>
            <person name="Walsh J."/>
            <person name="Wang H."/>
            <person name="Weinstock K."/>
            <person name="West A.P."/>
            <person name="Willey D.L."/>
            <person name="Whitehead S.L."/>
            <person name="Wilming L."/>
            <person name="Wray P.W."/>
            <person name="Young L."/>
            <person name="Chen Y."/>
            <person name="Lovering R.C."/>
            <person name="Moschonas N.K."/>
            <person name="Siebert R."/>
            <person name="Fechtel K."/>
            <person name="Bentley D."/>
            <person name="Durbin R.M."/>
            <person name="Hubbard T."/>
            <person name="Doucette-Stamm L."/>
            <person name="Beck S."/>
            <person name="Smith D.R."/>
            <person name="Rogers J."/>
        </authorList>
    </citation>
    <scope>NUCLEOTIDE SEQUENCE [LARGE SCALE GENOMIC DNA]</scope>
</reference>
<reference key="8">
    <citation type="submission" date="2005-09" db="EMBL/GenBank/DDBJ databases">
        <authorList>
            <person name="Mural R.J."/>
            <person name="Istrail S."/>
            <person name="Sutton G.G."/>
            <person name="Florea L."/>
            <person name="Halpern A.L."/>
            <person name="Mobarry C.M."/>
            <person name="Lippert R."/>
            <person name="Walenz B."/>
            <person name="Shatkay H."/>
            <person name="Dew I."/>
            <person name="Miller J.R."/>
            <person name="Flanigan M.J."/>
            <person name="Edwards N.J."/>
            <person name="Bolanos R."/>
            <person name="Fasulo D."/>
            <person name="Halldorsson B.V."/>
            <person name="Hannenhalli S."/>
            <person name="Turner R."/>
            <person name="Yooseph S."/>
            <person name="Lu F."/>
            <person name="Nusskern D.R."/>
            <person name="Shue B.C."/>
            <person name="Zheng X.H."/>
            <person name="Zhong F."/>
            <person name="Delcher A.L."/>
            <person name="Huson D.H."/>
            <person name="Kravitz S.A."/>
            <person name="Mouchard L."/>
            <person name="Reinert K."/>
            <person name="Remington K.A."/>
            <person name="Clark A.G."/>
            <person name="Waterman M.S."/>
            <person name="Eichler E.E."/>
            <person name="Adams M.D."/>
            <person name="Hunkapiller M.W."/>
            <person name="Myers E.W."/>
            <person name="Venter J.C."/>
        </authorList>
    </citation>
    <scope>NUCLEOTIDE SEQUENCE [LARGE SCALE GENOMIC DNA]</scope>
</reference>
<reference key="9">
    <citation type="journal article" date="2004" name="Genome Res.">
        <title>The status, quality, and expansion of the NIH full-length cDNA project: the Mammalian Gene Collection (MGC).</title>
        <authorList>
            <consortium name="The MGC Project Team"/>
        </authorList>
    </citation>
    <scope>NUCLEOTIDE SEQUENCE [LARGE SCALE MRNA] (ISOFORM 3)</scope>
    <source>
        <tissue>Uterus</tissue>
    </source>
</reference>
<reference key="10">
    <citation type="journal article" date="1999" name="J. Biol. Chem.">
        <title>Palmitoylation of a conserved cysteine in the regulator of G protein signaling (RGS) domain modulates the GTPase-activating activity of RGS4 and RGS10.</title>
        <authorList>
            <person name="Tu Y."/>
            <person name="Popov S."/>
            <person name="Slaughter C."/>
            <person name="Ross E.M."/>
        </authorList>
    </citation>
    <scope>PALMITOYLATION AT CYS-74</scope>
    <scope>FUNCTION</scope>
</reference>
<reference key="11">
    <citation type="journal article" date="1997" name="Science">
        <title>Inhibition of brain Gz GAP and other RGS proteins by palmitoylation of G protein alpha subunits.</title>
        <authorList>
            <person name="Tu Y."/>
            <person name="Wang J."/>
            <person name="Ross E.M."/>
        </authorList>
    </citation>
    <scope>FUNCTION</scope>
</reference>
<reference key="12">
    <citation type="journal article" date="2011" name="BMC Syst. Biol.">
        <title>Initial characterization of the human central proteome.</title>
        <authorList>
            <person name="Burkard T.R."/>
            <person name="Planyavsky M."/>
            <person name="Kaupe I."/>
            <person name="Breitwieser F.P."/>
            <person name="Buerckstuemmer T."/>
            <person name="Bennett K.L."/>
            <person name="Superti-Furga G."/>
            <person name="Colinge J."/>
        </authorList>
    </citation>
    <scope>IDENTIFICATION BY MASS SPECTROMETRY [LARGE SCALE ANALYSIS]</scope>
</reference>
<reference key="13">
    <citation type="journal article" date="2014" name="J. Proteomics">
        <title>An enzyme assisted RP-RPLC approach for in-depth analysis of human liver phosphoproteome.</title>
        <authorList>
            <person name="Bian Y."/>
            <person name="Song C."/>
            <person name="Cheng K."/>
            <person name="Dong M."/>
            <person name="Wang F."/>
            <person name="Huang J."/>
            <person name="Sun D."/>
            <person name="Wang L."/>
            <person name="Ye M."/>
            <person name="Zou H."/>
        </authorList>
    </citation>
    <scope>PHOSPHORYLATION [LARGE SCALE ANALYSIS] AT SER-24</scope>
    <scope>IDENTIFICATION BY MASS SPECTROMETRY [LARGE SCALE ANALYSIS]</scope>
    <source>
        <tissue>Liver</tissue>
    </source>
</reference>
<reference key="14">
    <citation type="submission" date="2006-10" db="PDB data bank">
        <title>Solution structure of the RGS domain of human regulator of G-protein signaling 10.</title>
        <authorList>
            <consortium name="RIKEN structural genomics initiative (RSGI)"/>
        </authorList>
    </citation>
    <scope>STRUCTURE BY NMR OF 31-166</scope>
</reference>
<reference key="15">
    <citation type="journal article" date="2008" name="Proc. Natl. Acad. Sci. U.S.A.">
        <title>Structural diversity in the RGS domain and its interaction with heterotrimeric G protein alpha-subunits.</title>
        <authorList>
            <person name="Soundararajan M."/>
            <person name="Willard F.S."/>
            <person name="Kimple A.J."/>
            <person name="Turnbull A.P."/>
            <person name="Ball L.J."/>
            <person name="Schoch G.A."/>
            <person name="Gileadi C."/>
            <person name="Fedorov O.Y."/>
            <person name="Dowler E.F."/>
            <person name="Higman V.A."/>
            <person name="Hutsell S.Q."/>
            <person name="Sundstroem M."/>
            <person name="Doyle D.A."/>
            <person name="Siderovski D.P."/>
        </authorList>
    </citation>
    <scope>X-RAY CRYSTALLOGRAPHY (2.71 ANGSTROMS) OF 17-160 IN COMPLEX WITH GNAI3</scope>
    <scope>FUNCTION</scope>
    <scope>INTERACTION WITH GNAI1 AND GNAI3</scope>
</reference>
<evidence type="ECO:0000250" key="1">
    <source>
        <dbReference type="UniProtKB" id="Q9CQE5"/>
    </source>
</evidence>
<evidence type="ECO:0000255" key="2">
    <source>
        <dbReference type="PROSITE-ProRule" id="PRU00171"/>
    </source>
</evidence>
<evidence type="ECO:0000256" key="3">
    <source>
        <dbReference type="SAM" id="MobiDB-lite"/>
    </source>
</evidence>
<evidence type="ECO:0000269" key="4">
    <source>
    </source>
</evidence>
<evidence type="ECO:0000269" key="5">
    <source>
    </source>
</evidence>
<evidence type="ECO:0000269" key="6">
    <source>
    </source>
</evidence>
<evidence type="ECO:0000269" key="7">
    <source>
    </source>
</evidence>
<evidence type="ECO:0000269" key="8">
    <source>
    </source>
</evidence>
<evidence type="ECO:0000269" key="9">
    <source>
    </source>
</evidence>
<evidence type="ECO:0000303" key="10">
    <source>
    </source>
</evidence>
<evidence type="ECO:0007744" key="11">
    <source>
    </source>
</evidence>
<evidence type="ECO:0007829" key="12">
    <source>
        <dbReference type="PDB" id="2DLR"/>
    </source>
</evidence>
<evidence type="ECO:0007829" key="13">
    <source>
        <dbReference type="PDB" id="2I59"/>
    </source>
</evidence>
<evidence type="ECO:0007829" key="14">
    <source>
        <dbReference type="PDB" id="2IHB"/>
    </source>
</evidence>
<proteinExistence type="evidence at protein level"/>